<feature type="chain" id="PRO_0000127671" description="ER-derived vesicles protein ERV29">
    <location>
        <begin position="1"/>
        <end position="310"/>
    </location>
</feature>
<feature type="topological domain" description="Cytoplasmic" evidence="8">
    <location>
        <begin position="1"/>
        <end position="108"/>
    </location>
</feature>
<feature type="transmembrane region" description="Helical" evidence="2">
    <location>
        <begin position="109"/>
        <end position="129"/>
    </location>
</feature>
<feature type="topological domain" description="Lumenal" evidence="8">
    <location>
        <begin position="130"/>
        <end position="137"/>
    </location>
</feature>
<feature type="transmembrane region" description="Helical" evidence="2">
    <location>
        <begin position="138"/>
        <end position="158"/>
    </location>
</feature>
<feature type="topological domain" description="Cytoplasmic" evidence="8">
    <location>
        <begin position="159"/>
        <end position="209"/>
    </location>
</feature>
<feature type="transmembrane region" description="Helical" evidence="2">
    <location>
        <begin position="210"/>
        <end position="230"/>
    </location>
</feature>
<feature type="topological domain" description="Lumenal" evidence="8">
    <location>
        <begin position="231"/>
        <end position="245"/>
    </location>
</feature>
<feature type="transmembrane region" description="Helical" evidence="2">
    <location>
        <begin position="246"/>
        <end position="266"/>
    </location>
</feature>
<feature type="topological domain" description="Cytoplasmic" evidence="8">
    <location>
        <begin position="267"/>
        <end position="310"/>
    </location>
</feature>
<feature type="region of interest" description="Disordered" evidence="3">
    <location>
        <begin position="11"/>
        <end position="31"/>
    </location>
</feature>
<feature type="short sequence motif" description="Di-lysine motif">
    <location>
        <begin position="307"/>
        <end position="310"/>
    </location>
</feature>
<feature type="sequence conflict" description="In Ref. 4; AAS56155." evidence="7" ref="4">
    <original>Y</original>
    <variation>C</variation>
    <location>
        <position position="64"/>
    </location>
</feature>
<dbReference type="EMBL" id="Z73069">
    <property type="protein sequence ID" value="CAA97315.1"/>
    <property type="molecule type" value="Genomic_DNA"/>
</dbReference>
<dbReference type="EMBL" id="AY557829">
    <property type="protein sequence ID" value="AAS56155.1"/>
    <property type="molecule type" value="Genomic_DNA"/>
</dbReference>
<dbReference type="EMBL" id="BK006941">
    <property type="protein sequence ID" value="DAA08372.1"/>
    <property type="molecule type" value="Genomic_DNA"/>
</dbReference>
<dbReference type="PIR" id="S64619">
    <property type="entry name" value="S64619"/>
</dbReference>
<dbReference type="RefSeq" id="NP_011800.3">
    <property type="nucleotide sequence ID" value="NM_001181413.3"/>
</dbReference>
<dbReference type="BioGRID" id="33534">
    <property type="interactions" value="311"/>
</dbReference>
<dbReference type="DIP" id="DIP-8110N"/>
<dbReference type="FunCoup" id="P53337">
    <property type="interactions" value="656"/>
</dbReference>
<dbReference type="IntAct" id="P53337">
    <property type="interactions" value="57"/>
</dbReference>
<dbReference type="MINT" id="P53337"/>
<dbReference type="STRING" id="4932.YGR284C"/>
<dbReference type="TCDB" id="9.B.214.1.1">
    <property type="family name" value="the er to golgi transport factor (er/g-tf) family"/>
</dbReference>
<dbReference type="iPTMnet" id="P53337"/>
<dbReference type="PaxDb" id="4932-YGR284C"/>
<dbReference type="PeptideAtlas" id="P53337"/>
<dbReference type="TopDownProteomics" id="P53337"/>
<dbReference type="EnsemblFungi" id="YGR284C_mRNA">
    <property type="protein sequence ID" value="YGR284C"/>
    <property type="gene ID" value="YGR284C"/>
</dbReference>
<dbReference type="GeneID" id="853201"/>
<dbReference type="KEGG" id="sce:YGR284C"/>
<dbReference type="AGR" id="SGD:S000003516"/>
<dbReference type="SGD" id="S000003516">
    <property type="gene designation" value="ERV29"/>
</dbReference>
<dbReference type="VEuPathDB" id="FungiDB:YGR284C"/>
<dbReference type="eggNOG" id="KOG3998">
    <property type="taxonomic scope" value="Eukaryota"/>
</dbReference>
<dbReference type="GeneTree" id="ENSGT00530000064123"/>
<dbReference type="HOGENOM" id="CLU_056195_0_0_1"/>
<dbReference type="InParanoid" id="P53337"/>
<dbReference type="OMA" id="RHRHFPW"/>
<dbReference type="OrthoDB" id="7859621at2759"/>
<dbReference type="BioCyc" id="YEAST:G3O-30946-MONOMER"/>
<dbReference type="Reactome" id="R-SCE-6798695">
    <property type="pathway name" value="Neutrophil degranulation"/>
</dbReference>
<dbReference type="Reactome" id="R-SCE-6811434">
    <property type="pathway name" value="COPI-dependent Golgi-to-ER retrograde traffic"/>
</dbReference>
<dbReference type="BioGRID-ORCS" id="853201">
    <property type="hits" value="0 hits in 10 CRISPR screens"/>
</dbReference>
<dbReference type="PRO" id="PR:P53337"/>
<dbReference type="Proteomes" id="UP000002311">
    <property type="component" value="Chromosome VII"/>
</dbReference>
<dbReference type="RNAct" id="P53337">
    <property type="molecule type" value="protein"/>
</dbReference>
<dbReference type="GO" id="GO:0030134">
    <property type="term" value="C:COPII-coated ER to Golgi transport vesicle"/>
    <property type="evidence" value="ECO:0000314"/>
    <property type="project" value="SGD"/>
</dbReference>
<dbReference type="GO" id="GO:0005783">
    <property type="term" value="C:endoplasmic reticulum"/>
    <property type="evidence" value="ECO:0007005"/>
    <property type="project" value="SGD"/>
</dbReference>
<dbReference type="GO" id="GO:0005789">
    <property type="term" value="C:endoplasmic reticulum membrane"/>
    <property type="evidence" value="ECO:0007669"/>
    <property type="project" value="UniProtKB-SubCell"/>
</dbReference>
<dbReference type="GO" id="GO:0005793">
    <property type="term" value="C:endoplasmic reticulum-Golgi intermediate compartment"/>
    <property type="evidence" value="ECO:0000318"/>
    <property type="project" value="GO_Central"/>
</dbReference>
<dbReference type="GO" id="GO:0097020">
    <property type="term" value="F:COPII receptor activity"/>
    <property type="evidence" value="ECO:0000315"/>
    <property type="project" value="SGD"/>
</dbReference>
<dbReference type="GO" id="GO:0006888">
    <property type="term" value="P:endoplasmic reticulum to Golgi vesicle-mediated transport"/>
    <property type="evidence" value="ECO:0000315"/>
    <property type="project" value="SGD"/>
</dbReference>
<dbReference type="GO" id="GO:0007030">
    <property type="term" value="P:Golgi organization"/>
    <property type="evidence" value="ECO:0000318"/>
    <property type="project" value="GO_Central"/>
</dbReference>
<dbReference type="InterPro" id="IPR002995">
    <property type="entry name" value="Surf4"/>
</dbReference>
<dbReference type="Pfam" id="PF02077">
    <property type="entry name" value="SURF4"/>
    <property type="match status" value="1"/>
</dbReference>
<dbReference type="PROSITE" id="PS01339">
    <property type="entry name" value="SURF4"/>
    <property type="match status" value="1"/>
</dbReference>
<name>ERV29_YEAST</name>
<organism>
    <name type="scientific">Saccharomyces cerevisiae (strain ATCC 204508 / S288c)</name>
    <name type="common">Baker's yeast</name>
    <dbReference type="NCBI Taxonomy" id="559292"/>
    <lineage>
        <taxon>Eukaryota</taxon>
        <taxon>Fungi</taxon>
        <taxon>Dikarya</taxon>
        <taxon>Ascomycota</taxon>
        <taxon>Saccharomycotina</taxon>
        <taxon>Saccharomycetes</taxon>
        <taxon>Saccharomycetales</taxon>
        <taxon>Saccharomycetaceae</taxon>
        <taxon>Saccharomyces</taxon>
    </lineage>
</organism>
<comment type="function">
    <text evidence="5 6">Constituent of COPII-coated endoplasmic reticulum-derived transport vesicles. Required for efficient transport of a subset of secretory proteins to the Golgi. The C-terminal di-lysine motif is required for exit from the endoplasmic reticulum. Required directly for packaging glycosylated pro-alpha-factor into COPII vesicles. Facilitates retrograde transport from the Golgi to the endoplasmic reticulum.</text>
</comment>
<comment type="interaction">
    <interactant intactId="EBI-23662">
        <id>P53337</id>
    </interactant>
    <interactant intactId="EBI-6581">
        <id>Q05359</id>
        <label>ERP1</label>
    </interactant>
    <organismsDiffer>false</organismsDiffer>
    <experiments>3</experiments>
</comment>
<comment type="interaction">
    <interactant intactId="EBI-23662">
        <id>P53337</id>
    </interactant>
    <interactant intactId="EBI-6598">
        <id>Q12450</id>
        <label>ERP4</label>
    </interactant>
    <organismsDiffer>false</organismsDiffer>
    <experiments>3</experiments>
</comment>
<comment type="interaction">
    <interactant intactId="EBI-23662">
        <id>P53337</id>
    </interactant>
    <interactant intactId="EBI-27850">
        <id>Q04651</id>
        <label>ERV41</label>
    </interactant>
    <organismsDiffer>false</organismsDiffer>
    <experiments>3</experiments>
</comment>
<comment type="interaction">
    <interactant intactId="EBI-23662">
        <id>P53337</id>
    </interactant>
    <interactant intactId="EBI-18175">
        <id>P38353</id>
        <label>SSH1</label>
    </interactant>
    <organismsDiffer>false</organismsDiffer>
    <experiments>3</experiments>
</comment>
<comment type="subcellular location">
    <subcellularLocation>
        <location evidence="4">Endoplasmic reticulum membrane</location>
        <topology evidence="4">Multi-pass membrane protein</topology>
    </subcellularLocation>
</comment>
<comment type="domain">
    <text evidence="1">The di-lysine motif confers endoplasmic reticulum localization for type I membrane proteins.</text>
</comment>
<comment type="similarity">
    <text evidence="7">Belongs to the SURF4 family.</text>
</comment>
<gene>
    <name type="primary">ERV29</name>
    <name type="ordered locus">YGR284C</name>
</gene>
<reference key="1">
    <citation type="journal article" date="1997" name="Yeast">
        <title>Sequence analysis of a near-subtelomeric 35.4 kb DNA segment on the right arm of chromosome VII from Saccharomyces cerevisiae carrying the MAL1 locus reveals 15 complete open reading frames, including ZUO1, BGL2 and BIO2 genes and an ABC transporter gene.</title>
        <authorList>
            <person name="Volckaert G."/>
            <person name="Voet M."/>
            <person name="Robben J."/>
        </authorList>
    </citation>
    <scope>NUCLEOTIDE SEQUENCE [GENOMIC DNA]</scope>
    <source>
        <strain>ATCC 96604 / S288c / FY1679</strain>
    </source>
</reference>
<reference key="2">
    <citation type="journal article" date="1997" name="Nature">
        <title>The nucleotide sequence of Saccharomyces cerevisiae chromosome VII.</title>
        <authorList>
            <person name="Tettelin H."/>
            <person name="Agostoni-Carbone M.L."/>
            <person name="Albermann K."/>
            <person name="Albers M."/>
            <person name="Arroyo J."/>
            <person name="Backes U."/>
            <person name="Barreiros T."/>
            <person name="Bertani I."/>
            <person name="Bjourson A.J."/>
            <person name="Brueckner M."/>
            <person name="Bruschi C.V."/>
            <person name="Carignani G."/>
            <person name="Castagnoli L."/>
            <person name="Cerdan E."/>
            <person name="Clemente M.L."/>
            <person name="Coblenz A."/>
            <person name="Coglievina M."/>
            <person name="Coissac E."/>
            <person name="Defoor E."/>
            <person name="Del Bino S."/>
            <person name="Delius H."/>
            <person name="Delneri D."/>
            <person name="de Wergifosse P."/>
            <person name="Dujon B."/>
            <person name="Durand P."/>
            <person name="Entian K.-D."/>
            <person name="Eraso P."/>
            <person name="Escribano V."/>
            <person name="Fabiani L."/>
            <person name="Fartmann B."/>
            <person name="Feroli F."/>
            <person name="Feuermann M."/>
            <person name="Frontali L."/>
            <person name="Garcia-Gonzalez M."/>
            <person name="Garcia-Saez M.I."/>
            <person name="Goffeau A."/>
            <person name="Guerreiro P."/>
            <person name="Hani J."/>
            <person name="Hansen M."/>
            <person name="Hebling U."/>
            <person name="Hernandez K."/>
            <person name="Heumann K."/>
            <person name="Hilger F."/>
            <person name="Hofmann B."/>
            <person name="Indge K.J."/>
            <person name="James C.M."/>
            <person name="Klima R."/>
            <person name="Koetter P."/>
            <person name="Kramer B."/>
            <person name="Kramer W."/>
            <person name="Lauquin G."/>
            <person name="Leuther H."/>
            <person name="Louis E.J."/>
            <person name="Maillier E."/>
            <person name="Marconi A."/>
            <person name="Martegani E."/>
            <person name="Mazon M.J."/>
            <person name="Mazzoni C."/>
            <person name="McReynolds A.D.K."/>
            <person name="Melchioretto P."/>
            <person name="Mewes H.-W."/>
            <person name="Minenkova O."/>
            <person name="Mueller-Auer S."/>
            <person name="Nawrocki A."/>
            <person name="Netter P."/>
            <person name="Neu R."/>
            <person name="Nombela C."/>
            <person name="Oliver S.G."/>
            <person name="Panzeri L."/>
            <person name="Paoluzi S."/>
            <person name="Plevani P."/>
            <person name="Portetelle D."/>
            <person name="Portillo F."/>
            <person name="Potier S."/>
            <person name="Purnelle B."/>
            <person name="Rieger M."/>
            <person name="Riles L."/>
            <person name="Rinaldi T."/>
            <person name="Robben J."/>
            <person name="Rodrigues-Pousada C."/>
            <person name="Rodriguez-Belmonte E."/>
            <person name="Rodriguez-Torres A.M."/>
            <person name="Rose M."/>
            <person name="Ruzzi M."/>
            <person name="Saliola M."/>
            <person name="Sanchez-Perez M."/>
            <person name="Schaefer B."/>
            <person name="Schaefer M."/>
            <person name="Scharfe M."/>
            <person name="Schmidheini T."/>
            <person name="Schreer A."/>
            <person name="Skala J."/>
            <person name="Souciet J.-L."/>
            <person name="Steensma H.Y."/>
            <person name="Talla E."/>
            <person name="Thierry A."/>
            <person name="Vandenbol M."/>
            <person name="van der Aart Q.J.M."/>
            <person name="Van Dyck L."/>
            <person name="Vanoni M."/>
            <person name="Verhasselt P."/>
            <person name="Voet M."/>
            <person name="Volckaert G."/>
            <person name="Wambutt R."/>
            <person name="Watson M.D."/>
            <person name="Weber N."/>
            <person name="Wedler E."/>
            <person name="Wedler H."/>
            <person name="Wipfli P."/>
            <person name="Wolf K."/>
            <person name="Wright L.F."/>
            <person name="Zaccaria P."/>
            <person name="Zimmermann M."/>
            <person name="Zollner A."/>
            <person name="Kleine K."/>
        </authorList>
    </citation>
    <scope>NUCLEOTIDE SEQUENCE [LARGE SCALE GENOMIC DNA]</scope>
    <source>
        <strain>ATCC 204508 / S288c</strain>
    </source>
</reference>
<reference key="3">
    <citation type="journal article" date="2014" name="G3 (Bethesda)">
        <title>The reference genome sequence of Saccharomyces cerevisiae: Then and now.</title>
        <authorList>
            <person name="Engel S.R."/>
            <person name="Dietrich F.S."/>
            <person name="Fisk D.G."/>
            <person name="Binkley G."/>
            <person name="Balakrishnan R."/>
            <person name="Costanzo M.C."/>
            <person name="Dwight S.S."/>
            <person name="Hitz B.C."/>
            <person name="Karra K."/>
            <person name="Nash R.S."/>
            <person name="Weng S."/>
            <person name="Wong E.D."/>
            <person name="Lloyd P."/>
            <person name="Skrzypek M.S."/>
            <person name="Miyasato S.R."/>
            <person name="Simison M."/>
            <person name="Cherry J.M."/>
        </authorList>
    </citation>
    <scope>GENOME REANNOTATION</scope>
    <source>
        <strain>ATCC 204508 / S288c</strain>
    </source>
</reference>
<reference key="4">
    <citation type="journal article" date="2007" name="Genome Res.">
        <title>Approaching a complete repository of sequence-verified protein-encoding clones for Saccharomyces cerevisiae.</title>
        <authorList>
            <person name="Hu Y."/>
            <person name="Rolfs A."/>
            <person name="Bhullar B."/>
            <person name="Murthy T.V.S."/>
            <person name="Zhu C."/>
            <person name="Berger M.F."/>
            <person name="Camargo A.A."/>
            <person name="Kelley F."/>
            <person name="McCarron S."/>
            <person name="Jepson D."/>
            <person name="Richardson A."/>
            <person name="Raphael J."/>
            <person name="Moreira D."/>
            <person name="Taycher E."/>
            <person name="Zuo D."/>
            <person name="Mohr S."/>
            <person name="Kane M.F."/>
            <person name="Williamson J."/>
            <person name="Simpson A.J.G."/>
            <person name="Bulyk M.L."/>
            <person name="Harlow E."/>
            <person name="Marsischky G."/>
            <person name="Kolodner R.D."/>
            <person name="LaBaer J."/>
        </authorList>
    </citation>
    <scope>NUCLEOTIDE SEQUENCE [GENOMIC DNA]</scope>
    <source>
        <strain>ATCC 204508 / S288c</strain>
    </source>
</reference>
<reference key="5">
    <citation type="journal article" date="2001" name="J. Cell Biol.">
        <title>Erv41p and Erv46p: new components of COPII vesicles involved in transport between the ER and Golgi complex.</title>
        <authorList>
            <person name="Otte S."/>
            <person name="Belden W.J."/>
            <person name="Heidtman M."/>
            <person name="Liu J."/>
            <person name="Jensen O.N."/>
            <person name="Barlowe C."/>
        </authorList>
    </citation>
    <scope>SUBCELLULAR LOCATION</scope>
</reference>
<reference key="6">
    <citation type="journal article" date="2001" name="Science">
        <title>Role of Erv29p in collecting soluble secretory proteins into ER-derived transport vesicles.</title>
        <authorList>
            <person name="Belden W.J."/>
            <person name="Barlowe C."/>
        </authorList>
    </citation>
    <scope>FUNCTION</scope>
</reference>
<reference key="7">
    <citation type="journal article" date="2004" name="Nat. Cell Biol.">
        <title>Sorting signals can direct receptor-mediated export of soluble proteins into COPII vesicles.</title>
        <authorList>
            <person name="Otte S."/>
            <person name="Barlowe C."/>
        </authorList>
    </citation>
    <scope>FUNCTION</scope>
</reference>
<reference key="8">
    <citation type="journal article" date="2006" name="Proc. Natl. Acad. Sci. U.S.A.">
        <title>A global topology map of the Saccharomyces cerevisiae membrane proteome.</title>
        <authorList>
            <person name="Kim H."/>
            <person name="Melen K."/>
            <person name="Oesterberg M."/>
            <person name="von Heijne G."/>
        </authorList>
    </citation>
    <scope>TOPOLOGY [LARGE SCALE ANALYSIS]</scope>
    <source>
        <strain>ATCC 208353 / W303-1A</strain>
    </source>
</reference>
<reference key="9">
    <citation type="journal article" date="2007" name="Mol. Membr. Biol.">
        <title>Membrane topology of the endoplasmic reticulum to Golgi transport factor Erv29p.</title>
        <authorList>
            <person name="Foley D.A."/>
            <person name="Sharpe H.J."/>
            <person name="Otte S."/>
        </authorList>
    </citation>
    <scope>TOPOLOGY</scope>
</reference>
<evidence type="ECO:0000250" key="1">
    <source>
        <dbReference type="UniProtKB" id="O15260"/>
    </source>
</evidence>
<evidence type="ECO:0000255" key="2"/>
<evidence type="ECO:0000256" key="3">
    <source>
        <dbReference type="SAM" id="MobiDB-lite"/>
    </source>
</evidence>
<evidence type="ECO:0000269" key="4">
    <source>
    </source>
</evidence>
<evidence type="ECO:0000269" key="5">
    <source>
    </source>
</evidence>
<evidence type="ECO:0000269" key="6">
    <source>
    </source>
</evidence>
<evidence type="ECO:0000305" key="7"/>
<evidence type="ECO:0000305" key="8">
    <source>
    </source>
</evidence>
<accession>P53337</accession>
<accession>D6VV61</accession>
<accession>E9P8T4</accession>
<proteinExistence type="evidence at protein level"/>
<sequence>MSYRGPIGNFGGMPMSSSQGPYSGGAQFRSNQNQSTSGILKQWKHSFEKFASRIEGLTDNAVVYKLKPYIPSLSRFFIVATFYEDSFRILSQWSDQIFYLNKWKHYPYFFVVVFLVVVTVSMLIGASLLVLRKQTNYATGVLCACVISQALVYGLFTGSSFVLRNFSVIGGLLIAFSDSIVQNKTTFGMLPELNSKNDKAKGYLLFAGRILIVLMFIAFTFSKSWFTVVLTIIGTICFAIGYKTKFASIMLGLILTFYNITLNNYWFYNNTKRDFLKYEFYQNLSIIGGLLLVTNTGAGELSVDEKKKIY</sequence>
<protein>
    <recommendedName>
        <fullName>ER-derived vesicles protein ERV29</fullName>
    </recommendedName>
</protein>
<keyword id="KW-0256">Endoplasmic reticulum</keyword>
<keyword id="KW-0472">Membrane</keyword>
<keyword id="KW-1185">Reference proteome</keyword>
<keyword id="KW-0812">Transmembrane</keyword>
<keyword id="KW-1133">Transmembrane helix</keyword>